<feature type="chain" id="PRO_1000058701" description="Putative competence-damage inducible protein">
    <location>
        <begin position="1"/>
        <end position="412"/>
    </location>
</feature>
<sequence length="412" mass="45425">MKAEIMAIGTEILLGDIVNTNAQFLAKELANLGIGVYHQSVVGDNSERILEAFDNAFKNCDTIITTGGLGPTKDDLSKELAAKYFNMEMCLREELLCDLEDYFKKNNLEMTENNKKQCYFPKEAIILPNPNGTAPGAILEGENNKRIILLPGPPREMEPMFTNHVVPYLSKFTDSVLVSKILRVFGIGESKMEDLVCDLLDNENPTVAPYAKNIDVILRITAKGKNKEEAEKLISPMEKEIRKRLGDNIYGEGEVTLEEVVGKLLVDKKMTVSTAESCTGGMVASTLINYPGISEVFMEGAVTYSNEAKMKRLGVKKETLEDFGAVSEECAREMAKGIAKNAGTRIGISTTGIAGPGGGTEEKPVGLVYAGLCIDGITKVKKFNFKADRQKVRTRTMMNVLDWLRRELEKID</sequence>
<dbReference type="EMBL" id="CP000246">
    <property type="protein sequence ID" value="ABG83069.1"/>
    <property type="molecule type" value="Genomic_DNA"/>
</dbReference>
<dbReference type="RefSeq" id="WP_004459640.1">
    <property type="nucleotide sequence ID" value="NC_008261.1"/>
</dbReference>
<dbReference type="SMR" id="Q0TUU6"/>
<dbReference type="STRING" id="195103.CPF_0130"/>
<dbReference type="PaxDb" id="195103-CPF_0130"/>
<dbReference type="KEGG" id="cpf:CPF_0130"/>
<dbReference type="eggNOG" id="COG1058">
    <property type="taxonomic scope" value="Bacteria"/>
</dbReference>
<dbReference type="eggNOG" id="COG1546">
    <property type="taxonomic scope" value="Bacteria"/>
</dbReference>
<dbReference type="HOGENOM" id="CLU_030805_9_3_9"/>
<dbReference type="Proteomes" id="UP000001823">
    <property type="component" value="Chromosome"/>
</dbReference>
<dbReference type="CDD" id="cd00885">
    <property type="entry name" value="cinA"/>
    <property type="match status" value="1"/>
</dbReference>
<dbReference type="Gene3D" id="3.30.70.2860">
    <property type="match status" value="1"/>
</dbReference>
<dbReference type="Gene3D" id="3.90.950.20">
    <property type="entry name" value="CinA-like"/>
    <property type="match status" value="1"/>
</dbReference>
<dbReference type="Gene3D" id="3.40.980.10">
    <property type="entry name" value="MoaB/Mog-like domain"/>
    <property type="match status" value="1"/>
</dbReference>
<dbReference type="HAMAP" id="MF_00226_B">
    <property type="entry name" value="CinA_B"/>
    <property type="match status" value="1"/>
</dbReference>
<dbReference type="InterPro" id="IPR050101">
    <property type="entry name" value="CinA"/>
</dbReference>
<dbReference type="InterPro" id="IPR036653">
    <property type="entry name" value="CinA-like_C"/>
</dbReference>
<dbReference type="InterPro" id="IPR008136">
    <property type="entry name" value="CinA_C"/>
</dbReference>
<dbReference type="InterPro" id="IPR041424">
    <property type="entry name" value="CinA_KH"/>
</dbReference>
<dbReference type="InterPro" id="IPR008135">
    <property type="entry name" value="Competence-induced_CinA"/>
</dbReference>
<dbReference type="InterPro" id="IPR036425">
    <property type="entry name" value="MoaB/Mog-like_dom_sf"/>
</dbReference>
<dbReference type="InterPro" id="IPR001453">
    <property type="entry name" value="MoaB/Mog_dom"/>
</dbReference>
<dbReference type="NCBIfam" id="TIGR00200">
    <property type="entry name" value="cinA_nterm"/>
    <property type="match status" value="1"/>
</dbReference>
<dbReference type="NCBIfam" id="TIGR00177">
    <property type="entry name" value="molyb_syn"/>
    <property type="match status" value="1"/>
</dbReference>
<dbReference type="NCBIfam" id="TIGR00199">
    <property type="entry name" value="PncC_domain"/>
    <property type="match status" value="1"/>
</dbReference>
<dbReference type="NCBIfam" id="NF001813">
    <property type="entry name" value="PRK00549.1"/>
    <property type="match status" value="1"/>
</dbReference>
<dbReference type="PANTHER" id="PTHR13939">
    <property type="entry name" value="NICOTINAMIDE-NUCLEOTIDE AMIDOHYDROLASE PNCC"/>
    <property type="match status" value="1"/>
</dbReference>
<dbReference type="PANTHER" id="PTHR13939:SF0">
    <property type="entry name" value="NMN AMIDOHYDROLASE-LIKE PROTEIN YFAY"/>
    <property type="match status" value="1"/>
</dbReference>
<dbReference type="Pfam" id="PF02464">
    <property type="entry name" value="CinA"/>
    <property type="match status" value="1"/>
</dbReference>
<dbReference type="Pfam" id="PF18146">
    <property type="entry name" value="CinA_KH"/>
    <property type="match status" value="1"/>
</dbReference>
<dbReference type="Pfam" id="PF00994">
    <property type="entry name" value="MoCF_biosynth"/>
    <property type="match status" value="1"/>
</dbReference>
<dbReference type="PIRSF" id="PIRSF006728">
    <property type="entry name" value="CinA"/>
    <property type="match status" value="1"/>
</dbReference>
<dbReference type="SMART" id="SM00852">
    <property type="entry name" value="MoCF_biosynth"/>
    <property type="match status" value="1"/>
</dbReference>
<dbReference type="SUPFAM" id="SSF142433">
    <property type="entry name" value="CinA-like"/>
    <property type="match status" value="1"/>
</dbReference>
<dbReference type="SUPFAM" id="SSF53218">
    <property type="entry name" value="Molybdenum cofactor biosynthesis proteins"/>
    <property type="match status" value="1"/>
</dbReference>
<proteinExistence type="inferred from homology"/>
<protein>
    <recommendedName>
        <fullName evidence="1">Putative competence-damage inducible protein</fullName>
    </recommendedName>
</protein>
<comment type="similarity">
    <text evidence="1">Belongs to the CinA family.</text>
</comment>
<organism>
    <name type="scientific">Clostridium perfringens (strain ATCC 13124 / DSM 756 / JCM 1290 / NCIMB 6125 / NCTC 8237 / Type A)</name>
    <dbReference type="NCBI Taxonomy" id="195103"/>
    <lineage>
        <taxon>Bacteria</taxon>
        <taxon>Bacillati</taxon>
        <taxon>Bacillota</taxon>
        <taxon>Clostridia</taxon>
        <taxon>Eubacteriales</taxon>
        <taxon>Clostridiaceae</taxon>
        <taxon>Clostridium</taxon>
    </lineage>
</organism>
<reference key="1">
    <citation type="journal article" date="2006" name="Genome Res.">
        <title>Skewed genomic variability in strains of the toxigenic bacterial pathogen, Clostridium perfringens.</title>
        <authorList>
            <person name="Myers G.S.A."/>
            <person name="Rasko D.A."/>
            <person name="Cheung J.K."/>
            <person name="Ravel J."/>
            <person name="Seshadri R."/>
            <person name="DeBoy R.T."/>
            <person name="Ren Q."/>
            <person name="Varga J."/>
            <person name="Awad M.M."/>
            <person name="Brinkac L.M."/>
            <person name="Daugherty S.C."/>
            <person name="Haft D.H."/>
            <person name="Dodson R.J."/>
            <person name="Madupu R."/>
            <person name="Nelson W.C."/>
            <person name="Rosovitz M.J."/>
            <person name="Sullivan S.A."/>
            <person name="Khouri H."/>
            <person name="Dimitrov G.I."/>
            <person name="Watkins K.L."/>
            <person name="Mulligan S."/>
            <person name="Benton J."/>
            <person name="Radune D."/>
            <person name="Fisher D.J."/>
            <person name="Atkins H.S."/>
            <person name="Hiscox T."/>
            <person name="Jost B.H."/>
            <person name="Billington S.J."/>
            <person name="Songer J.G."/>
            <person name="McClane B.A."/>
            <person name="Titball R.W."/>
            <person name="Rood J.I."/>
            <person name="Melville S.B."/>
            <person name="Paulsen I.T."/>
        </authorList>
    </citation>
    <scope>NUCLEOTIDE SEQUENCE [LARGE SCALE GENOMIC DNA]</scope>
    <source>
        <strain>ATCC 13124 / DSM 756 / JCM 1290 / NCIMB 6125 / NCTC 8237 / S 107 / Type A</strain>
    </source>
</reference>
<gene>
    <name evidence="1" type="primary">cinA</name>
    <name type="ordered locus">CPF_0130</name>
</gene>
<name>CINA_CLOP1</name>
<evidence type="ECO:0000255" key="1">
    <source>
        <dbReference type="HAMAP-Rule" id="MF_00226"/>
    </source>
</evidence>
<accession>Q0TUU6</accession>